<reference key="1">
    <citation type="journal article" date="2007" name="BMC Microbiol.">
        <title>Subtle genetic changes enhance virulence of methicillin resistant and sensitive Staphylococcus aureus.</title>
        <authorList>
            <person name="Highlander S.K."/>
            <person name="Hulten K.G."/>
            <person name="Qin X."/>
            <person name="Jiang H."/>
            <person name="Yerrapragada S."/>
            <person name="Mason E.O. Jr."/>
            <person name="Shang Y."/>
            <person name="Williams T.M."/>
            <person name="Fortunov R.M."/>
            <person name="Liu Y."/>
            <person name="Igboeli O."/>
            <person name="Petrosino J."/>
            <person name="Tirumalai M."/>
            <person name="Uzman A."/>
            <person name="Fox G.E."/>
            <person name="Cardenas A.M."/>
            <person name="Muzny D.M."/>
            <person name="Hemphill L."/>
            <person name="Ding Y."/>
            <person name="Dugan S."/>
            <person name="Blyth P.R."/>
            <person name="Buhay C.J."/>
            <person name="Dinh H.H."/>
            <person name="Hawes A.C."/>
            <person name="Holder M."/>
            <person name="Kovar C.L."/>
            <person name="Lee S.L."/>
            <person name="Liu W."/>
            <person name="Nazareth L.V."/>
            <person name="Wang Q."/>
            <person name="Zhou J."/>
            <person name="Kaplan S.L."/>
            <person name="Weinstock G.M."/>
        </authorList>
    </citation>
    <scope>NUCLEOTIDE SEQUENCE [LARGE SCALE GENOMIC DNA]</scope>
    <source>
        <strain>USA300 / TCH1516</strain>
    </source>
</reference>
<keyword id="KW-0028">Amino-acid biosynthesis</keyword>
<keyword id="KW-0067">ATP-binding</keyword>
<keyword id="KW-0963">Cytoplasm</keyword>
<keyword id="KW-0418">Kinase</keyword>
<keyword id="KW-0547">Nucleotide-binding</keyword>
<keyword id="KW-0791">Threonine biosynthesis</keyword>
<keyword id="KW-0808">Transferase</keyword>
<sequence length="304" mass="33267">MSNVLELTIPASTANLGVGFDSIGMALDKFLHLSVKETSGTKWEYIFHDDASKQLPTDETNFIYHVAQQVASKYSVDLPNLCIEMRSDIPLARGLGSSASALVGAIYIANYFGDIQLSKHEVLQLATEIEGHPDNVAPTIYGGLIAGYYNDVSKETSVAHIDIPDVDVIVTIPTYELKTEASRRALPQKLTHSEAVKSSAISNTMICALAQHNYELAGKLMQQDGFHEPYRQHLIAEFDEVKTIASQHNAYATVISGAGPTILIFSRKENSGELVRSLNSQVVSCHSELVDINISGVKERIVYQ</sequence>
<comment type="function">
    <text evidence="1">Catalyzes the ATP-dependent phosphorylation of L-homoserine to L-homoserine phosphate.</text>
</comment>
<comment type="catalytic activity">
    <reaction evidence="1">
        <text>L-homoserine + ATP = O-phospho-L-homoserine + ADP + H(+)</text>
        <dbReference type="Rhea" id="RHEA:13985"/>
        <dbReference type="ChEBI" id="CHEBI:15378"/>
        <dbReference type="ChEBI" id="CHEBI:30616"/>
        <dbReference type="ChEBI" id="CHEBI:57476"/>
        <dbReference type="ChEBI" id="CHEBI:57590"/>
        <dbReference type="ChEBI" id="CHEBI:456216"/>
        <dbReference type="EC" id="2.7.1.39"/>
    </reaction>
</comment>
<comment type="pathway">
    <text evidence="1">Amino-acid biosynthesis; L-threonine biosynthesis; L-threonine from L-aspartate: step 4/5.</text>
</comment>
<comment type="subcellular location">
    <subcellularLocation>
        <location evidence="1">Cytoplasm</location>
    </subcellularLocation>
</comment>
<comment type="similarity">
    <text evidence="1">Belongs to the GHMP kinase family. Homoserine kinase subfamily.</text>
</comment>
<accession>A8Z213</accession>
<evidence type="ECO:0000255" key="1">
    <source>
        <dbReference type="HAMAP-Rule" id="MF_00384"/>
    </source>
</evidence>
<dbReference type="EC" id="2.7.1.39" evidence="1"/>
<dbReference type="EMBL" id="CP000730">
    <property type="protein sequence ID" value="ABX29288.1"/>
    <property type="molecule type" value="Genomic_DNA"/>
</dbReference>
<dbReference type="RefSeq" id="WP_000073184.1">
    <property type="nucleotide sequence ID" value="NC_010079.1"/>
</dbReference>
<dbReference type="SMR" id="A8Z213"/>
<dbReference type="KEGG" id="sax:USA300HOU_1275"/>
<dbReference type="HOGENOM" id="CLU_041243_0_0_9"/>
<dbReference type="UniPathway" id="UPA00050">
    <property type="reaction ID" value="UER00064"/>
</dbReference>
<dbReference type="GO" id="GO:0005737">
    <property type="term" value="C:cytoplasm"/>
    <property type="evidence" value="ECO:0007669"/>
    <property type="project" value="UniProtKB-SubCell"/>
</dbReference>
<dbReference type="GO" id="GO:0005524">
    <property type="term" value="F:ATP binding"/>
    <property type="evidence" value="ECO:0007669"/>
    <property type="project" value="UniProtKB-UniRule"/>
</dbReference>
<dbReference type="GO" id="GO:0004413">
    <property type="term" value="F:homoserine kinase activity"/>
    <property type="evidence" value="ECO:0007669"/>
    <property type="project" value="UniProtKB-UniRule"/>
</dbReference>
<dbReference type="GO" id="GO:0009088">
    <property type="term" value="P:threonine biosynthetic process"/>
    <property type="evidence" value="ECO:0007669"/>
    <property type="project" value="UniProtKB-UniRule"/>
</dbReference>
<dbReference type="Gene3D" id="3.30.230.10">
    <property type="match status" value="1"/>
</dbReference>
<dbReference type="Gene3D" id="3.30.70.890">
    <property type="entry name" value="GHMP kinase, C-terminal domain"/>
    <property type="match status" value="1"/>
</dbReference>
<dbReference type="HAMAP" id="MF_00384">
    <property type="entry name" value="Homoser_kinase"/>
    <property type="match status" value="1"/>
</dbReference>
<dbReference type="InterPro" id="IPR013750">
    <property type="entry name" value="GHMP_kinase_C_dom"/>
</dbReference>
<dbReference type="InterPro" id="IPR036554">
    <property type="entry name" value="GHMP_kinase_C_sf"/>
</dbReference>
<dbReference type="InterPro" id="IPR006204">
    <property type="entry name" value="GHMP_kinase_N_dom"/>
</dbReference>
<dbReference type="InterPro" id="IPR006203">
    <property type="entry name" value="GHMP_knse_ATP-bd_CS"/>
</dbReference>
<dbReference type="InterPro" id="IPR000870">
    <property type="entry name" value="Homoserine_kinase"/>
</dbReference>
<dbReference type="InterPro" id="IPR020568">
    <property type="entry name" value="Ribosomal_Su5_D2-typ_SF"/>
</dbReference>
<dbReference type="InterPro" id="IPR014721">
    <property type="entry name" value="Ribsml_uS5_D2-typ_fold_subgr"/>
</dbReference>
<dbReference type="NCBIfam" id="TIGR00191">
    <property type="entry name" value="thrB"/>
    <property type="match status" value="1"/>
</dbReference>
<dbReference type="PANTHER" id="PTHR20861:SF1">
    <property type="entry name" value="HOMOSERINE KINASE"/>
    <property type="match status" value="1"/>
</dbReference>
<dbReference type="PANTHER" id="PTHR20861">
    <property type="entry name" value="HOMOSERINE/4-DIPHOSPHOCYTIDYL-2-C-METHYL-D-ERYTHRITOL KINASE"/>
    <property type="match status" value="1"/>
</dbReference>
<dbReference type="Pfam" id="PF08544">
    <property type="entry name" value="GHMP_kinases_C"/>
    <property type="match status" value="1"/>
</dbReference>
<dbReference type="Pfam" id="PF00288">
    <property type="entry name" value="GHMP_kinases_N"/>
    <property type="match status" value="1"/>
</dbReference>
<dbReference type="PIRSF" id="PIRSF000676">
    <property type="entry name" value="Homoser_kin"/>
    <property type="match status" value="1"/>
</dbReference>
<dbReference type="PRINTS" id="PR00958">
    <property type="entry name" value="HOMSERKINASE"/>
</dbReference>
<dbReference type="SUPFAM" id="SSF55060">
    <property type="entry name" value="GHMP Kinase, C-terminal domain"/>
    <property type="match status" value="1"/>
</dbReference>
<dbReference type="SUPFAM" id="SSF54211">
    <property type="entry name" value="Ribosomal protein S5 domain 2-like"/>
    <property type="match status" value="1"/>
</dbReference>
<dbReference type="PROSITE" id="PS00627">
    <property type="entry name" value="GHMP_KINASES_ATP"/>
    <property type="match status" value="1"/>
</dbReference>
<protein>
    <recommendedName>
        <fullName evidence="1">Homoserine kinase</fullName>
        <shortName evidence="1">HK</shortName>
        <shortName evidence="1">HSK</shortName>
        <ecNumber evidence="1">2.7.1.39</ecNumber>
    </recommendedName>
</protein>
<gene>
    <name evidence="1" type="primary">thrB</name>
    <name type="ordered locus">USA300HOU_1275</name>
</gene>
<feature type="chain" id="PRO_1000080131" description="Homoserine kinase">
    <location>
        <begin position="1"/>
        <end position="304"/>
    </location>
</feature>
<feature type="binding site" evidence="1">
    <location>
        <begin position="90"/>
        <end position="100"/>
    </location>
    <ligand>
        <name>ATP</name>
        <dbReference type="ChEBI" id="CHEBI:30616"/>
    </ligand>
</feature>
<name>KHSE_STAAT</name>
<proteinExistence type="inferred from homology"/>
<organism>
    <name type="scientific">Staphylococcus aureus (strain USA300 / TCH1516)</name>
    <dbReference type="NCBI Taxonomy" id="451516"/>
    <lineage>
        <taxon>Bacteria</taxon>
        <taxon>Bacillati</taxon>
        <taxon>Bacillota</taxon>
        <taxon>Bacilli</taxon>
        <taxon>Bacillales</taxon>
        <taxon>Staphylococcaceae</taxon>
        <taxon>Staphylococcus</taxon>
    </lineage>
</organism>